<comment type="function">
    <text evidence="1">May control the transcriptional activity of MYC. Stimulates the activation of E box-dependent transcription by MYC (By similarity).</text>
</comment>
<comment type="subunit">
    <text evidence="2">Binds via its C-terminal region to the N-terminal region of MYC. Associates with AKAP1/S-AKAP84. Interacts with MYCBPAP. Interacts with CFAP91.</text>
</comment>
<comment type="subcellular location">
    <subcellularLocation>
        <location evidence="1">Cytoplasm</location>
    </subcellularLocation>
    <subcellularLocation>
        <location evidence="1">Nucleus</location>
    </subcellularLocation>
    <text evidence="1">Translocates into the nucleus in the S phase of the cell cycle.</text>
</comment>
<comment type="similarity">
    <text evidence="3">Belongs to the AMY1 family.</text>
</comment>
<name>MYCBP_PONAB</name>
<gene>
    <name type="primary">MYCBP</name>
    <name type="synonym">AMY1</name>
</gene>
<reference key="1">
    <citation type="submission" date="2004-11" db="EMBL/GenBank/DDBJ databases">
        <authorList>
            <consortium name="The German cDNA consortium"/>
        </authorList>
    </citation>
    <scope>NUCLEOTIDE SEQUENCE [LARGE SCALE MRNA]</scope>
    <source>
        <tissue>Kidney</tissue>
    </source>
</reference>
<feature type="chain" id="PRO_0000249729" description="c-Myc-binding protein">
    <location>
        <begin position="1"/>
        <end position="103"/>
    </location>
</feature>
<protein>
    <recommendedName>
        <fullName>c-Myc-binding protein</fullName>
    </recommendedName>
    <alternativeName>
        <fullName>Associate of Myc 1</fullName>
        <shortName>AMY-1</shortName>
    </alternativeName>
</protein>
<sequence>MAHYKAADSKREQFRRYLEKSGVLDTLTKVLVALYEEPEKPNSALDFLKHHLGAATPENPEIELLRLELAEIKEKYEAIVEENKKLKAKLAQYEPPQEEKRAE</sequence>
<keyword id="KW-0963">Cytoplasm</keyword>
<keyword id="KW-0539">Nucleus</keyword>
<keyword id="KW-1185">Reference proteome</keyword>
<keyword id="KW-0804">Transcription</keyword>
<keyword id="KW-0805">Transcription regulation</keyword>
<dbReference type="EMBL" id="CR860210">
    <property type="protein sequence ID" value="CAH92352.1"/>
    <property type="molecule type" value="mRNA"/>
</dbReference>
<dbReference type="RefSeq" id="NP_001128990.1">
    <property type="nucleotide sequence ID" value="NM_001135518.1"/>
</dbReference>
<dbReference type="SMR" id="Q5R7A8"/>
<dbReference type="FunCoup" id="Q5R7A8">
    <property type="interactions" value="2893"/>
</dbReference>
<dbReference type="STRING" id="9601.ENSPPYP00000001751"/>
<dbReference type="Ensembl" id="ENSPPYT00000001808.3">
    <property type="protein sequence ID" value="ENSPPYP00000001751.3"/>
    <property type="gene ID" value="ENSPPYG00000001515.3"/>
</dbReference>
<dbReference type="GeneID" id="100190830"/>
<dbReference type="KEGG" id="pon:100190830"/>
<dbReference type="CTD" id="26292"/>
<dbReference type="eggNOG" id="ENOG502S2IC">
    <property type="taxonomic scope" value="Eukaryota"/>
</dbReference>
<dbReference type="GeneTree" id="ENSGT00390000017974"/>
<dbReference type="HOGENOM" id="CLU_135895_0_1_1"/>
<dbReference type="InParanoid" id="Q5R7A8"/>
<dbReference type="OMA" id="MMHYKEE"/>
<dbReference type="OrthoDB" id="524165at2759"/>
<dbReference type="Proteomes" id="UP000001595">
    <property type="component" value="Chromosome 1"/>
</dbReference>
<dbReference type="GO" id="GO:0005739">
    <property type="term" value="C:mitochondrion"/>
    <property type="evidence" value="ECO:0007669"/>
    <property type="project" value="Ensembl"/>
</dbReference>
<dbReference type="GO" id="GO:0005654">
    <property type="term" value="C:nucleoplasm"/>
    <property type="evidence" value="ECO:0007669"/>
    <property type="project" value="Ensembl"/>
</dbReference>
<dbReference type="GO" id="GO:0005634">
    <property type="term" value="C:nucleus"/>
    <property type="evidence" value="ECO:0000250"/>
    <property type="project" value="UniProtKB"/>
</dbReference>
<dbReference type="GO" id="GO:0003713">
    <property type="term" value="F:transcription coactivator activity"/>
    <property type="evidence" value="ECO:0000250"/>
    <property type="project" value="UniProtKB"/>
</dbReference>
<dbReference type="GO" id="GO:0006355">
    <property type="term" value="P:regulation of DNA-templated transcription"/>
    <property type="evidence" value="ECO:0000250"/>
    <property type="project" value="UniProtKB"/>
</dbReference>
<dbReference type="GO" id="GO:0007283">
    <property type="term" value="P:spermatogenesis"/>
    <property type="evidence" value="ECO:0007669"/>
    <property type="project" value="Ensembl"/>
</dbReference>
<dbReference type="CDD" id="cd21937">
    <property type="entry name" value="ZIP_MycBP-like"/>
    <property type="match status" value="1"/>
</dbReference>
<dbReference type="Gene3D" id="6.10.250.1060">
    <property type="match status" value="1"/>
</dbReference>
<dbReference type="InterPro" id="IPR026060">
    <property type="entry name" value="AMY1"/>
</dbReference>
<dbReference type="PANTHER" id="PTHR13168">
    <property type="entry name" value="ASSOCIATE OF C-MYC AMY-1"/>
    <property type="match status" value="1"/>
</dbReference>
<dbReference type="PANTHER" id="PTHR13168:SF0">
    <property type="entry name" value="C-MYC-BINDING PROTEIN"/>
    <property type="match status" value="1"/>
</dbReference>
<dbReference type="PRINTS" id="PR02028">
    <property type="entry name" value="CMYCBINDINGP"/>
</dbReference>
<accession>Q5R7A8</accession>
<organism>
    <name type="scientific">Pongo abelii</name>
    <name type="common">Sumatran orangutan</name>
    <name type="synonym">Pongo pygmaeus abelii</name>
    <dbReference type="NCBI Taxonomy" id="9601"/>
    <lineage>
        <taxon>Eukaryota</taxon>
        <taxon>Metazoa</taxon>
        <taxon>Chordata</taxon>
        <taxon>Craniata</taxon>
        <taxon>Vertebrata</taxon>
        <taxon>Euteleostomi</taxon>
        <taxon>Mammalia</taxon>
        <taxon>Eutheria</taxon>
        <taxon>Euarchontoglires</taxon>
        <taxon>Primates</taxon>
        <taxon>Haplorrhini</taxon>
        <taxon>Catarrhini</taxon>
        <taxon>Hominidae</taxon>
        <taxon>Pongo</taxon>
    </lineage>
</organism>
<evidence type="ECO:0000250" key="1"/>
<evidence type="ECO:0000250" key="2">
    <source>
        <dbReference type="UniProtKB" id="Q99417"/>
    </source>
</evidence>
<evidence type="ECO:0000305" key="3"/>
<proteinExistence type="inferred from homology"/>